<sequence>MEIQIIRCLQDNYSYLIVDKAKNIACVIDPSEAKPVIKYLEDKNIHLKYILNTHHHYDHVGGNKELKEKYGASVIGYKGDKDRIPEIDILVGDQDIWHEENFQAKIFHIPGHTLGHICFYFYNEESVFTGDTLFSLGCGKIFEGTYSQMYNSLMKIKALPEKTKIYCGHEYTKQNSKFCIAHDQDNENLKVKIKLIDEKLEKNLPTIPSTIKEELECNIFLRSGTEENFSKLRDLKDNF</sequence>
<evidence type="ECO:0000255" key="1">
    <source>
        <dbReference type="HAMAP-Rule" id="MF_01374"/>
    </source>
</evidence>
<organism>
    <name type="scientific">Pelagibacter ubique (strain HTCC1062)</name>
    <dbReference type="NCBI Taxonomy" id="335992"/>
    <lineage>
        <taxon>Bacteria</taxon>
        <taxon>Pseudomonadati</taxon>
        <taxon>Pseudomonadota</taxon>
        <taxon>Alphaproteobacteria</taxon>
        <taxon>Candidatus Pelagibacterales</taxon>
        <taxon>Candidatus Pelagibacteraceae</taxon>
        <taxon>Candidatus Pelagibacter</taxon>
    </lineage>
</organism>
<accession>Q4FP49</accession>
<protein>
    <recommendedName>
        <fullName evidence="1">Hydroxyacylglutathione hydrolase</fullName>
        <ecNumber evidence="1">3.1.2.6</ecNumber>
    </recommendedName>
    <alternativeName>
        <fullName evidence="1">Glyoxalase II</fullName>
        <shortName evidence="1">Glx II</shortName>
    </alternativeName>
</protein>
<proteinExistence type="inferred from homology"/>
<keyword id="KW-0378">Hydrolase</keyword>
<keyword id="KW-0479">Metal-binding</keyword>
<keyword id="KW-1185">Reference proteome</keyword>
<keyword id="KW-0862">Zinc</keyword>
<feature type="chain" id="PRO_0000309671" description="Hydroxyacylglutathione hydrolase">
    <location>
        <begin position="1"/>
        <end position="239"/>
    </location>
</feature>
<feature type="binding site" evidence="1">
    <location>
        <position position="54"/>
    </location>
    <ligand>
        <name>Zn(2+)</name>
        <dbReference type="ChEBI" id="CHEBI:29105"/>
        <label>1</label>
    </ligand>
</feature>
<feature type="binding site" evidence="1">
    <location>
        <position position="56"/>
    </location>
    <ligand>
        <name>Zn(2+)</name>
        <dbReference type="ChEBI" id="CHEBI:29105"/>
        <label>1</label>
    </ligand>
</feature>
<feature type="binding site" evidence="1">
    <location>
        <position position="58"/>
    </location>
    <ligand>
        <name>Zn(2+)</name>
        <dbReference type="ChEBI" id="CHEBI:29105"/>
        <label>2</label>
    </ligand>
</feature>
<feature type="binding site" evidence="1">
    <location>
        <position position="59"/>
    </location>
    <ligand>
        <name>Zn(2+)</name>
        <dbReference type="ChEBI" id="CHEBI:29105"/>
        <label>2</label>
    </ligand>
</feature>
<feature type="binding site" evidence="1">
    <location>
        <position position="112"/>
    </location>
    <ligand>
        <name>Zn(2+)</name>
        <dbReference type="ChEBI" id="CHEBI:29105"/>
        <label>1</label>
    </ligand>
</feature>
<feature type="binding site" evidence="1">
    <location>
        <position position="131"/>
    </location>
    <ligand>
        <name>Zn(2+)</name>
        <dbReference type="ChEBI" id="CHEBI:29105"/>
        <label>1</label>
    </ligand>
</feature>
<feature type="binding site" evidence="1">
    <location>
        <position position="131"/>
    </location>
    <ligand>
        <name>Zn(2+)</name>
        <dbReference type="ChEBI" id="CHEBI:29105"/>
        <label>2</label>
    </ligand>
</feature>
<feature type="binding site" evidence="1">
    <location>
        <position position="169"/>
    </location>
    <ligand>
        <name>Zn(2+)</name>
        <dbReference type="ChEBI" id="CHEBI:29105"/>
        <label>2</label>
    </ligand>
</feature>
<dbReference type="EC" id="3.1.2.6" evidence="1"/>
<dbReference type="EMBL" id="CP000084">
    <property type="protein sequence ID" value="AAZ21040.1"/>
    <property type="molecule type" value="Genomic_DNA"/>
</dbReference>
<dbReference type="RefSeq" id="WP_006997691.1">
    <property type="nucleotide sequence ID" value="NC_007205.1"/>
</dbReference>
<dbReference type="SMR" id="Q4FP49"/>
<dbReference type="STRING" id="335992.SAR11_0219"/>
<dbReference type="GeneID" id="66294716"/>
<dbReference type="KEGG" id="pub:SAR11_0219"/>
<dbReference type="eggNOG" id="COG0491">
    <property type="taxonomic scope" value="Bacteria"/>
</dbReference>
<dbReference type="HOGENOM" id="CLU_030571_4_1_5"/>
<dbReference type="OrthoDB" id="9802248at2"/>
<dbReference type="UniPathway" id="UPA00619">
    <property type="reaction ID" value="UER00676"/>
</dbReference>
<dbReference type="Proteomes" id="UP000002528">
    <property type="component" value="Chromosome"/>
</dbReference>
<dbReference type="GO" id="GO:0004416">
    <property type="term" value="F:hydroxyacylglutathione hydrolase activity"/>
    <property type="evidence" value="ECO:0007669"/>
    <property type="project" value="UniProtKB-UniRule"/>
</dbReference>
<dbReference type="GO" id="GO:0046872">
    <property type="term" value="F:metal ion binding"/>
    <property type="evidence" value="ECO:0007669"/>
    <property type="project" value="UniProtKB-KW"/>
</dbReference>
<dbReference type="GO" id="GO:0019243">
    <property type="term" value="P:methylglyoxal catabolic process to D-lactate via S-lactoyl-glutathione"/>
    <property type="evidence" value="ECO:0007669"/>
    <property type="project" value="InterPro"/>
</dbReference>
<dbReference type="CDD" id="cd07723">
    <property type="entry name" value="hydroxyacylglutathione_hydrolase_MBL-fold"/>
    <property type="match status" value="1"/>
</dbReference>
<dbReference type="Gene3D" id="3.60.15.10">
    <property type="entry name" value="Ribonuclease Z/Hydroxyacylglutathione hydrolase-like"/>
    <property type="match status" value="1"/>
</dbReference>
<dbReference type="HAMAP" id="MF_01374">
    <property type="entry name" value="Glyoxalase_2"/>
    <property type="match status" value="1"/>
</dbReference>
<dbReference type="InterPro" id="IPR035680">
    <property type="entry name" value="Clx_II_MBL"/>
</dbReference>
<dbReference type="InterPro" id="IPR050110">
    <property type="entry name" value="Glyoxalase_II_hydrolase"/>
</dbReference>
<dbReference type="InterPro" id="IPR032282">
    <property type="entry name" value="HAGH_C"/>
</dbReference>
<dbReference type="InterPro" id="IPR017782">
    <property type="entry name" value="Hydroxyacylglutathione_Hdrlase"/>
</dbReference>
<dbReference type="InterPro" id="IPR001279">
    <property type="entry name" value="Metallo-B-lactamas"/>
</dbReference>
<dbReference type="InterPro" id="IPR036866">
    <property type="entry name" value="RibonucZ/Hydroxyglut_hydro"/>
</dbReference>
<dbReference type="NCBIfam" id="TIGR03413">
    <property type="entry name" value="GSH_gloB"/>
    <property type="match status" value="1"/>
</dbReference>
<dbReference type="PANTHER" id="PTHR43705">
    <property type="entry name" value="HYDROXYACYLGLUTATHIONE HYDROLASE"/>
    <property type="match status" value="1"/>
</dbReference>
<dbReference type="PANTHER" id="PTHR43705:SF1">
    <property type="entry name" value="HYDROXYACYLGLUTATHIONE HYDROLASE GLOB"/>
    <property type="match status" value="1"/>
</dbReference>
<dbReference type="Pfam" id="PF16123">
    <property type="entry name" value="HAGH_C"/>
    <property type="match status" value="1"/>
</dbReference>
<dbReference type="Pfam" id="PF00753">
    <property type="entry name" value="Lactamase_B"/>
    <property type="match status" value="1"/>
</dbReference>
<dbReference type="PIRSF" id="PIRSF005457">
    <property type="entry name" value="Glx"/>
    <property type="match status" value="1"/>
</dbReference>
<dbReference type="SMART" id="SM00849">
    <property type="entry name" value="Lactamase_B"/>
    <property type="match status" value="1"/>
</dbReference>
<dbReference type="SUPFAM" id="SSF56281">
    <property type="entry name" value="Metallo-hydrolase/oxidoreductase"/>
    <property type="match status" value="1"/>
</dbReference>
<gene>
    <name evidence="1" type="primary">gloB</name>
    <name type="ordered locus">SAR11_0219</name>
</gene>
<name>GLO2_PELUB</name>
<reference key="1">
    <citation type="journal article" date="2005" name="Science">
        <title>Genome streamlining in a cosmopolitan oceanic bacterium.</title>
        <authorList>
            <person name="Giovannoni S.J."/>
            <person name="Tripp H.J."/>
            <person name="Givan S."/>
            <person name="Podar M."/>
            <person name="Vergin K.L."/>
            <person name="Baptista D."/>
            <person name="Bibbs L."/>
            <person name="Eads J."/>
            <person name="Richardson T.H."/>
            <person name="Noordewier M."/>
            <person name="Rappe M.S."/>
            <person name="Short J.M."/>
            <person name="Carrington J.C."/>
            <person name="Mathur E.J."/>
        </authorList>
    </citation>
    <scope>NUCLEOTIDE SEQUENCE [LARGE SCALE GENOMIC DNA]</scope>
    <source>
        <strain>HTCC1062</strain>
    </source>
</reference>
<comment type="function">
    <text evidence="1">Thiolesterase that catalyzes the hydrolysis of S-D-lactoyl-glutathione to form glutathione and D-lactic acid.</text>
</comment>
<comment type="catalytic activity">
    <reaction evidence="1">
        <text>an S-(2-hydroxyacyl)glutathione + H2O = a 2-hydroxy carboxylate + glutathione + H(+)</text>
        <dbReference type="Rhea" id="RHEA:21864"/>
        <dbReference type="ChEBI" id="CHEBI:15377"/>
        <dbReference type="ChEBI" id="CHEBI:15378"/>
        <dbReference type="ChEBI" id="CHEBI:57925"/>
        <dbReference type="ChEBI" id="CHEBI:58896"/>
        <dbReference type="ChEBI" id="CHEBI:71261"/>
        <dbReference type="EC" id="3.1.2.6"/>
    </reaction>
</comment>
<comment type="cofactor">
    <cofactor evidence="1">
        <name>Zn(2+)</name>
        <dbReference type="ChEBI" id="CHEBI:29105"/>
    </cofactor>
    <text evidence="1">Binds 2 Zn(2+) ions per subunit.</text>
</comment>
<comment type="pathway">
    <text evidence="1">Secondary metabolite metabolism; methylglyoxal degradation; (R)-lactate from methylglyoxal: step 2/2.</text>
</comment>
<comment type="subunit">
    <text evidence="1">Monomer.</text>
</comment>
<comment type="similarity">
    <text evidence="1">Belongs to the metallo-beta-lactamase superfamily. Glyoxalase II family.</text>
</comment>